<gene>
    <name evidence="1" type="primary">groEL2</name>
    <name evidence="1" type="synonym">groL2</name>
    <name type="ordered locus">RHE_CH01239</name>
</gene>
<evidence type="ECO:0000255" key="1">
    <source>
        <dbReference type="HAMAP-Rule" id="MF_00600"/>
    </source>
</evidence>
<protein>
    <recommendedName>
        <fullName evidence="1">Chaperonin GroEL 2</fullName>
        <ecNumber evidence="1">5.6.1.7</ecNumber>
    </recommendedName>
    <alternativeName>
        <fullName evidence="1">60 kDa chaperonin 2</fullName>
    </alternativeName>
    <alternativeName>
        <fullName evidence="1">Chaperonin-60 2</fullName>
        <shortName evidence="1">Cpn60 2</shortName>
    </alternativeName>
</protein>
<feature type="chain" id="PRO_0000256959" description="Chaperonin GroEL 2">
    <location>
        <begin position="1"/>
        <end position="542"/>
    </location>
</feature>
<feature type="binding site" evidence="1">
    <location>
        <begin position="30"/>
        <end position="33"/>
    </location>
    <ligand>
        <name>ATP</name>
        <dbReference type="ChEBI" id="CHEBI:30616"/>
    </ligand>
</feature>
<feature type="binding site" evidence="1">
    <location>
        <position position="51"/>
    </location>
    <ligand>
        <name>ATP</name>
        <dbReference type="ChEBI" id="CHEBI:30616"/>
    </ligand>
</feature>
<feature type="binding site" evidence="1">
    <location>
        <begin position="87"/>
        <end position="91"/>
    </location>
    <ligand>
        <name>ATP</name>
        <dbReference type="ChEBI" id="CHEBI:30616"/>
    </ligand>
</feature>
<feature type="binding site" evidence="1">
    <location>
        <position position="415"/>
    </location>
    <ligand>
        <name>ATP</name>
        <dbReference type="ChEBI" id="CHEBI:30616"/>
    </ligand>
</feature>
<feature type="binding site" evidence="1">
    <location>
        <position position="496"/>
    </location>
    <ligand>
        <name>ATP</name>
        <dbReference type="ChEBI" id="CHEBI:30616"/>
    </ligand>
</feature>
<comment type="function">
    <text evidence="1">Together with its co-chaperonin GroES, plays an essential role in assisting protein folding. The GroEL-GroES system forms a nano-cage that allows encapsulation of the non-native substrate proteins and provides a physical environment optimized to promote and accelerate protein folding.</text>
</comment>
<comment type="catalytic activity">
    <reaction evidence="1">
        <text>ATP + H2O + a folded polypeptide = ADP + phosphate + an unfolded polypeptide.</text>
        <dbReference type="EC" id="5.6.1.7"/>
    </reaction>
</comment>
<comment type="subunit">
    <text evidence="1">Forms a cylinder of 14 subunits composed of two heptameric rings stacked back-to-back. Interacts with the co-chaperonin GroES.</text>
</comment>
<comment type="subcellular location">
    <subcellularLocation>
        <location evidence="1">Cytoplasm</location>
    </subcellularLocation>
</comment>
<comment type="similarity">
    <text evidence="1">Belongs to the chaperonin (HSP60) family.</text>
</comment>
<reference key="1">
    <citation type="journal article" date="2006" name="Proc. Natl. Acad. Sci. U.S.A.">
        <title>The partitioned Rhizobium etli genome: genetic and metabolic redundancy in seven interacting replicons.</title>
        <authorList>
            <person name="Gonzalez V."/>
            <person name="Santamaria R.I."/>
            <person name="Bustos P."/>
            <person name="Hernandez-Gonzalez I."/>
            <person name="Medrano-Soto A."/>
            <person name="Moreno-Hagelsieb G."/>
            <person name="Janga S.C."/>
            <person name="Ramirez M.A."/>
            <person name="Jimenez-Jacinto V."/>
            <person name="Collado-Vides J."/>
            <person name="Davila G."/>
        </authorList>
    </citation>
    <scope>NUCLEOTIDE SEQUENCE [LARGE SCALE GENOMIC DNA]</scope>
    <source>
        <strain>ATCC 51251 / DSM 11541 / JCM 21823 / NBRC 15573 / CFN 42</strain>
    </source>
</reference>
<keyword id="KW-0067">ATP-binding</keyword>
<keyword id="KW-0143">Chaperone</keyword>
<keyword id="KW-0963">Cytoplasm</keyword>
<keyword id="KW-0413">Isomerase</keyword>
<keyword id="KW-0547">Nucleotide-binding</keyword>
<keyword id="KW-1185">Reference proteome</keyword>
<organism>
    <name type="scientific">Rhizobium etli (strain ATCC 51251 / DSM 11541 / JCM 21823 / NBRC 15573 / CFN 42)</name>
    <dbReference type="NCBI Taxonomy" id="347834"/>
    <lineage>
        <taxon>Bacteria</taxon>
        <taxon>Pseudomonadati</taxon>
        <taxon>Pseudomonadota</taxon>
        <taxon>Alphaproteobacteria</taxon>
        <taxon>Hyphomicrobiales</taxon>
        <taxon>Rhizobiaceae</taxon>
        <taxon>Rhizobium/Agrobacterium group</taxon>
        <taxon>Rhizobium</taxon>
    </lineage>
</organism>
<accession>Q2KAU2</accession>
<proteinExistence type="inferred from homology"/>
<dbReference type="EC" id="5.6.1.7" evidence="1"/>
<dbReference type="EMBL" id="CP000133">
    <property type="protein sequence ID" value="ABC90044.1"/>
    <property type="molecule type" value="Genomic_DNA"/>
</dbReference>
<dbReference type="RefSeq" id="WP_011424578.1">
    <property type="nucleotide sequence ID" value="NC_007761.1"/>
</dbReference>
<dbReference type="SMR" id="Q2KAU2"/>
<dbReference type="KEGG" id="ret:RHE_CH01239"/>
<dbReference type="eggNOG" id="COG0459">
    <property type="taxonomic scope" value="Bacteria"/>
</dbReference>
<dbReference type="HOGENOM" id="CLU_016503_3_0_5"/>
<dbReference type="OrthoDB" id="9766614at2"/>
<dbReference type="Proteomes" id="UP000001936">
    <property type="component" value="Chromosome"/>
</dbReference>
<dbReference type="GO" id="GO:0005737">
    <property type="term" value="C:cytoplasm"/>
    <property type="evidence" value="ECO:0007669"/>
    <property type="project" value="UniProtKB-SubCell"/>
</dbReference>
<dbReference type="GO" id="GO:0005524">
    <property type="term" value="F:ATP binding"/>
    <property type="evidence" value="ECO:0007669"/>
    <property type="project" value="UniProtKB-UniRule"/>
</dbReference>
<dbReference type="GO" id="GO:0140662">
    <property type="term" value="F:ATP-dependent protein folding chaperone"/>
    <property type="evidence" value="ECO:0007669"/>
    <property type="project" value="InterPro"/>
</dbReference>
<dbReference type="GO" id="GO:0016853">
    <property type="term" value="F:isomerase activity"/>
    <property type="evidence" value="ECO:0007669"/>
    <property type="project" value="UniProtKB-KW"/>
</dbReference>
<dbReference type="GO" id="GO:0051082">
    <property type="term" value="F:unfolded protein binding"/>
    <property type="evidence" value="ECO:0007669"/>
    <property type="project" value="UniProtKB-UniRule"/>
</dbReference>
<dbReference type="GO" id="GO:0042026">
    <property type="term" value="P:protein refolding"/>
    <property type="evidence" value="ECO:0007669"/>
    <property type="project" value="UniProtKB-UniRule"/>
</dbReference>
<dbReference type="CDD" id="cd03344">
    <property type="entry name" value="GroEL"/>
    <property type="match status" value="1"/>
</dbReference>
<dbReference type="FunFam" id="1.10.560.10:FF:000001">
    <property type="entry name" value="60 kDa chaperonin"/>
    <property type="match status" value="1"/>
</dbReference>
<dbReference type="FunFam" id="3.50.7.10:FF:000001">
    <property type="entry name" value="60 kDa chaperonin"/>
    <property type="match status" value="1"/>
</dbReference>
<dbReference type="Gene3D" id="3.50.7.10">
    <property type="entry name" value="GroEL"/>
    <property type="match status" value="1"/>
</dbReference>
<dbReference type="Gene3D" id="1.10.560.10">
    <property type="entry name" value="GroEL-like equatorial domain"/>
    <property type="match status" value="1"/>
</dbReference>
<dbReference type="Gene3D" id="3.30.260.10">
    <property type="entry name" value="TCP-1-like chaperonin intermediate domain"/>
    <property type="match status" value="1"/>
</dbReference>
<dbReference type="HAMAP" id="MF_00600">
    <property type="entry name" value="CH60"/>
    <property type="match status" value="1"/>
</dbReference>
<dbReference type="InterPro" id="IPR018370">
    <property type="entry name" value="Chaperonin_Cpn60_CS"/>
</dbReference>
<dbReference type="InterPro" id="IPR001844">
    <property type="entry name" value="Cpn60/GroEL"/>
</dbReference>
<dbReference type="InterPro" id="IPR002423">
    <property type="entry name" value="Cpn60/GroEL/TCP-1"/>
</dbReference>
<dbReference type="InterPro" id="IPR027409">
    <property type="entry name" value="GroEL-like_apical_dom_sf"/>
</dbReference>
<dbReference type="InterPro" id="IPR027413">
    <property type="entry name" value="GROEL-like_equatorial_sf"/>
</dbReference>
<dbReference type="InterPro" id="IPR027410">
    <property type="entry name" value="TCP-1-like_intermed_sf"/>
</dbReference>
<dbReference type="NCBIfam" id="TIGR02348">
    <property type="entry name" value="GroEL"/>
    <property type="match status" value="1"/>
</dbReference>
<dbReference type="NCBIfam" id="NF000592">
    <property type="entry name" value="PRK00013.1"/>
    <property type="match status" value="1"/>
</dbReference>
<dbReference type="NCBIfam" id="NF009487">
    <property type="entry name" value="PRK12849.1"/>
    <property type="match status" value="1"/>
</dbReference>
<dbReference type="NCBIfam" id="NF009488">
    <property type="entry name" value="PRK12850.1"/>
    <property type="match status" value="1"/>
</dbReference>
<dbReference type="NCBIfam" id="NF009489">
    <property type="entry name" value="PRK12851.1"/>
    <property type="match status" value="1"/>
</dbReference>
<dbReference type="PANTHER" id="PTHR45633">
    <property type="entry name" value="60 KDA HEAT SHOCK PROTEIN, MITOCHONDRIAL"/>
    <property type="match status" value="1"/>
</dbReference>
<dbReference type="Pfam" id="PF00118">
    <property type="entry name" value="Cpn60_TCP1"/>
    <property type="match status" value="1"/>
</dbReference>
<dbReference type="PRINTS" id="PR00298">
    <property type="entry name" value="CHAPERONIN60"/>
</dbReference>
<dbReference type="SUPFAM" id="SSF52029">
    <property type="entry name" value="GroEL apical domain-like"/>
    <property type="match status" value="1"/>
</dbReference>
<dbReference type="SUPFAM" id="SSF48592">
    <property type="entry name" value="GroEL equatorial domain-like"/>
    <property type="match status" value="1"/>
</dbReference>
<dbReference type="SUPFAM" id="SSF54849">
    <property type="entry name" value="GroEL-intermediate domain like"/>
    <property type="match status" value="1"/>
</dbReference>
<dbReference type="PROSITE" id="PS00296">
    <property type="entry name" value="CHAPERONINS_CPN60"/>
    <property type="match status" value="1"/>
</dbReference>
<sequence length="542" mass="57692">MAAKEVKFHSDARERMLRGVDVLANAVKVTLGPKGRNVVIDKSFGAPRITKDGVSVAKEIELEDKFENMGAQMLREVASKTNDLAGDGTTTATVLAQAIVKEGAKAVASGMNPMDLKRGIDLAVDAVVGELKANARKISNNSEIAQVGTISANGDAEIGRYLAEAMEKVGNEGVITVEEAKTAETELEVVEGMQFDRGYLSPYFVTNQDKMRVELEDPYILIHEKKLSNLQSMLPVLEAVVQSGKPLLIIAEDVEGEALATLVVNKLRGGLKIAAVKAPGFGDRRKAMLEDIAILTAGTVISEDLGIKLENVTLNMLGRAKKVAIEKENTTIIDGAGSKAELDGRTAQIRAQIEETTSDYDREKLQERLAKLAGGVAVIRVGGSTEVEVKEKKDRVDDALHATRAAVEEGILPGGGVALLRAVKALDSIKTANDDQRVGVDIVRRAIEAPVRQIAENAGAEGSIIVGKLREKSDFSYGWNAQTGEYGDLYAQGVIDPAKVVRTALQDAASVAGLLVTTEAMIAEKPKKEAAPAMPAGAGMDF</sequence>
<name>CH602_RHIEC</name>